<accession>P34476</accession>
<organism>
    <name type="scientific">Caenorhabditis elegans</name>
    <dbReference type="NCBI Taxonomy" id="6239"/>
    <lineage>
        <taxon>Eukaryota</taxon>
        <taxon>Metazoa</taxon>
        <taxon>Ecdysozoa</taxon>
        <taxon>Nematoda</taxon>
        <taxon>Chromadorea</taxon>
        <taxon>Rhabditida</taxon>
        <taxon>Rhabditina</taxon>
        <taxon>Rhabditomorpha</taxon>
        <taxon>Rhabditoidea</taxon>
        <taxon>Rhabditidae</taxon>
        <taxon>Peloderinae</taxon>
        <taxon>Caenorhabditis</taxon>
    </lineage>
</organism>
<protein>
    <recommendedName>
        <fullName>Probable DNA-directed RNA polymerases I and III subunit RPAC2</fullName>
        <shortName>RNA polymerases I and III subunit AC2</shortName>
    </recommendedName>
    <alternativeName>
        <fullName>AC19</fullName>
    </alternativeName>
    <alternativeName>
        <fullName>DNA-directed RNA polymerase I subunit D</fullName>
    </alternativeName>
</protein>
<reference key="1">
    <citation type="journal article" date="1994" name="Nature">
        <title>2.2 Mb of contiguous nucleotide sequence from chromosome III of C. elegans.</title>
        <authorList>
            <person name="Wilson R."/>
            <person name="Ainscough R."/>
            <person name="Anderson K."/>
            <person name="Baynes C."/>
            <person name="Berks M."/>
            <person name="Bonfield J."/>
            <person name="Burton J."/>
            <person name="Connell M."/>
            <person name="Copsey T."/>
            <person name="Cooper J."/>
            <person name="Coulson A."/>
            <person name="Craxton M."/>
            <person name="Dear S."/>
            <person name="Du Z."/>
            <person name="Durbin R."/>
            <person name="Favello A."/>
            <person name="Fraser A."/>
            <person name="Fulton L."/>
            <person name="Gardner A."/>
            <person name="Green P."/>
            <person name="Hawkins T."/>
            <person name="Hillier L."/>
            <person name="Jier M."/>
            <person name="Johnston L."/>
            <person name="Jones M."/>
            <person name="Kershaw J."/>
            <person name="Kirsten J."/>
            <person name="Laisster N."/>
            <person name="Latreille P."/>
            <person name="Lightning J."/>
            <person name="Lloyd C."/>
            <person name="Mortimore B."/>
            <person name="O'Callaghan M."/>
            <person name="Parsons J."/>
            <person name="Percy C."/>
            <person name="Rifken L."/>
            <person name="Roopra A."/>
            <person name="Saunders D."/>
            <person name="Shownkeen R."/>
            <person name="Sims M."/>
            <person name="Smaldon N."/>
            <person name="Smith A."/>
            <person name="Smith M."/>
            <person name="Sonnhammer E."/>
            <person name="Staden R."/>
            <person name="Sulston J."/>
            <person name="Thierry-Mieg J."/>
            <person name="Thomas K."/>
            <person name="Vaudin M."/>
            <person name="Vaughan K."/>
            <person name="Waterston R."/>
            <person name="Watson A."/>
            <person name="Weinstock L."/>
            <person name="Wilkinson-Sproat J."/>
            <person name="Wohldman P."/>
        </authorList>
    </citation>
    <scope>NUCLEOTIDE SEQUENCE [LARGE SCALE GENOMIC DNA]</scope>
    <source>
        <strain>Bristol N2</strain>
    </source>
</reference>
<reference key="2">
    <citation type="journal article" date="1998" name="Science">
        <title>Genome sequence of the nematode C. elegans: a platform for investigating biology.</title>
        <authorList>
            <consortium name="The C. elegans sequencing consortium"/>
        </authorList>
    </citation>
    <scope>NUCLEOTIDE SEQUENCE [LARGE SCALE GENOMIC DNA]</scope>
    <source>
        <strain>Bristol N2</strain>
    </source>
</reference>
<proteinExistence type="inferred from homology"/>
<sequence length="144" mass="16595">MGKKNEKIVEEAEKVEAETMEVDEQPQETPQVDDEEDLNVPSKKKMEILDPKSFEQDPSNLTLIMYEEDHTIGNSIKHILSRMDEVEFCGYNVPHPLEDKILFRVQTKDGINALEVLAKAFESVEQIFSTIRGKFEESYEQSQS</sequence>
<dbReference type="EMBL" id="Z22179">
    <property type="protein sequence ID" value="CAA80165.1"/>
    <property type="molecule type" value="Genomic_DNA"/>
</dbReference>
<dbReference type="PIR" id="S40981">
    <property type="entry name" value="S40981"/>
</dbReference>
<dbReference type="RefSeq" id="NP_499132.1">
    <property type="nucleotide sequence ID" value="NM_066731.7"/>
</dbReference>
<dbReference type="SMR" id="P34476"/>
<dbReference type="BioGRID" id="41557">
    <property type="interactions" value="16"/>
</dbReference>
<dbReference type="ComplexPortal" id="CPX-2812">
    <property type="entry name" value="DNA-directed RNA polymerase III complex"/>
</dbReference>
<dbReference type="ComplexPortal" id="CPX-8913">
    <property type="entry name" value="DNA-directed RNA polymerase I complex"/>
</dbReference>
<dbReference type="FunCoup" id="P34476">
    <property type="interactions" value="1745"/>
</dbReference>
<dbReference type="STRING" id="6239.F58A4.9.2"/>
<dbReference type="PaxDb" id="6239-F58A4.9.1"/>
<dbReference type="PeptideAtlas" id="P34476"/>
<dbReference type="EnsemblMetazoa" id="F58A4.9.1">
    <property type="protein sequence ID" value="F58A4.9.1"/>
    <property type="gene ID" value="WBGene00010230"/>
</dbReference>
<dbReference type="GeneID" id="176362"/>
<dbReference type="KEGG" id="cel:CELE_F58A4.9"/>
<dbReference type="UCSC" id="F58A4.9.2">
    <property type="organism name" value="c. elegans"/>
</dbReference>
<dbReference type="AGR" id="WB:WBGene00010230"/>
<dbReference type="CTD" id="176362"/>
<dbReference type="WormBase" id="F58A4.9">
    <property type="protein sequence ID" value="CE00225"/>
    <property type="gene ID" value="WBGene00010230"/>
    <property type="gene designation" value="rpac-19"/>
</dbReference>
<dbReference type="eggNOG" id="KOG3438">
    <property type="taxonomic scope" value="Eukaryota"/>
</dbReference>
<dbReference type="GeneTree" id="ENSGT00550000075160"/>
<dbReference type="HOGENOM" id="CLU_090381_3_0_1"/>
<dbReference type="InParanoid" id="P34476"/>
<dbReference type="OMA" id="MRIQMYD"/>
<dbReference type="OrthoDB" id="510325at2759"/>
<dbReference type="PhylomeDB" id="P34476"/>
<dbReference type="PRO" id="PR:P34476"/>
<dbReference type="Proteomes" id="UP000001940">
    <property type="component" value="Chromosome III"/>
</dbReference>
<dbReference type="Bgee" id="WBGene00010230">
    <property type="expression patterns" value="Expressed in adult organism and 4 other cell types or tissues"/>
</dbReference>
<dbReference type="GO" id="GO:0005736">
    <property type="term" value="C:RNA polymerase I complex"/>
    <property type="evidence" value="ECO:0000318"/>
    <property type="project" value="GO_Central"/>
</dbReference>
<dbReference type="GO" id="GO:0005666">
    <property type="term" value="C:RNA polymerase III complex"/>
    <property type="evidence" value="ECO:0000318"/>
    <property type="project" value="GO_Central"/>
</dbReference>
<dbReference type="GO" id="GO:0003677">
    <property type="term" value="F:DNA binding"/>
    <property type="evidence" value="ECO:0007669"/>
    <property type="project" value="InterPro"/>
</dbReference>
<dbReference type="GO" id="GO:0003899">
    <property type="term" value="F:DNA-directed RNA polymerase activity"/>
    <property type="evidence" value="ECO:0007669"/>
    <property type="project" value="InterPro"/>
</dbReference>
<dbReference type="GO" id="GO:0046983">
    <property type="term" value="F:protein dimerization activity"/>
    <property type="evidence" value="ECO:0007669"/>
    <property type="project" value="InterPro"/>
</dbReference>
<dbReference type="GO" id="GO:0006383">
    <property type="term" value="P:transcription by RNA polymerase III"/>
    <property type="evidence" value="ECO:0000318"/>
    <property type="project" value="GO_Central"/>
</dbReference>
<dbReference type="GO" id="GO:0006362">
    <property type="term" value="P:transcription elongation by RNA polymerase I"/>
    <property type="evidence" value="ECO:0000318"/>
    <property type="project" value="GO_Central"/>
</dbReference>
<dbReference type="CDD" id="cd07029">
    <property type="entry name" value="RNAP_I_III_AC19"/>
    <property type="match status" value="1"/>
</dbReference>
<dbReference type="FunFam" id="3.30.1360.10:FF:000025">
    <property type="entry name" value="Probable DNA-directed RNA polymerases I and III subunit RPAC2"/>
    <property type="match status" value="1"/>
</dbReference>
<dbReference type="Gene3D" id="3.30.1360.10">
    <property type="entry name" value="RNA polymerase, RBP11-like subunit"/>
    <property type="match status" value="1"/>
</dbReference>
<dbReference type="HAMAP" id="MF_00261">
    <property type="entry name" value="RNApol_arch_Rpo11"/>
    <property type="match status" value="1"/>
</dbReference>
<dbReference type="InterPro" id="IPR036603">
    <property type="entry name" value="RBP11-like"/>
</dbReference>
<dbReference type="InterPro" id="IPR009025">
    <property type="entry name" value="RBP11-like_dimer"/>
</dbReference>
<dbReference type="InterPro" id="IPR008193">
    <property type="entry name" value="RNA_pol_Rpb11_13-16kDa_CS"/>
</dbReference>
<dbReference type="InterPro" id="IPR033898">
    <property type="entry name" value="RNAP_AC19"/>
</dbReference>
<dbReference type="InterPro" id="IPR022905">
    <property type="entry name" value="Rpo11-like"/>
</dbReference>
<dbReference type="PANTHER" id="PTHR13946">
    <property type="entry name" value="DNA-DIRECTED RNA POLYMERASE I,II,III"/>
    <property type="match status" value="1"/>
</dbReference>
<dbReference type="PANTHER" id="PTHR13946:SF28">
    <property type="entry name" value="DNA-DIRECTED RNA POLYMERASES I AND III SUBUNIT RPAC2"/>
    <property type="match status" value="1"/>
</dbReference>
<dbReference type="Pfam" id="PF13656">
    <property type="entry name" value="RNA_pol_L_2"/>
    <property type="match status" value="1"/>
</dbReference>
<dbReference type="SUPFAM" id="SSF55257">
    <property type="entry name" value="RBP11-like subunits of RNA polymerase"/>
    <property type="match status" value="1"/>
</dbReference>
<dbReference type="PROSITE" id="PS01154">
    <property type="entry name" value="RNA_POL_L_13KD"/>
    <property type="match status" value="1"/>
</dbReference>
<evidence type="ECO:0000250" key="1"/>
<evidence type="ECO:0000256" key="2">
    <source>
        <dbReference type="SAM" id="MobiDB-lite"/>
    </source>
</evidence>
<evidence type="ECO:0000305" key="3"/>
<keyword id="KW-0240">DNA-directed RNA polymerase</keyword>
<keyword id="KW-0539">Nucleus</keyword>
<keyword id="KW-1185">Reference proteome</keyword>
<keyword id="KW-0804">Transcription</keyword>
<gene>
    <name type="primary">rpac-19</name>
    <name type="ORF">F58A4.9</name>
</gene>
<comment type="function">
    <text evidence="1">DNA-dependent RNA polymerase catalyzes the transcription of DNA into RNA using the four ribonucleoside triphosphates as substrates. Common core component of RNA polymerases I and III which synthesize ribosomal RNA precursors and small RNAs, such as 5S rRNA and tRNAs, respectively (By similarity).</text>
</comment>
<comment type="subunit">
    <text evidence="1">Component of the RNA polymerase I (Pol I) and RNA polymerase III (Pol III) complexes consisting of at least 13 and 17 subunits, respectively.</text>
</comment>
<comment type="subcellular location">
    <subcellularLocation>
        <location evidence="1">Nucleus</location>
    </subcellularLocation>
</comment>
<comment type="similarity">
    <text evidence="3">Belongs to the archaeal Rpo11/eukaryotic RPB11/RPC19 RNA polymerase subunit family.</text>
</comment>
<feature type="chain" id="PRO_0000149320" description="Probable DNA-directed RNA polymerases I and III subunit RPAC2">
    <location>
        <begin position="1"/>
        <end position="144"/>
    </location>
</feature>
<feature type="region of interest" description="Disordered" evidence="2">
    <location>
        <begin position="14"/>
        <end position="47"/>
    </location>
</feature>
<feature type="compositionally biased region" description="Acidic residues" evidence="2">
    <location>
        <begin position="18"/>
        <end position="38"/>
    </location>
</feature>
<name>RPAC2_CAEEL</name>